<organismHost>
    <name type="scientific">Avena byzantina</name>
    <dbReference type="NCBI Taxonomy" id="146531"/>
</organismHost>
<organismHost>
    <name type="scientific">Avena sativa</name>
    <name type="common">Oat</name>
    <dbReference type="NCBI Taxonomy" id="4498"/>
</organismHost>
<organismHost>
    <name type="scientific">Hordeum vulgare</name>
    <name type="common">Barley</name>
    <dbReference type="NCBI Taxonomy" id="4513"/>
</organismHost>
<organismHost>
    <name type="scientific">Lolium multiflorum</name>
    <name type="common">Italian ryegrass</name>
    <name type="synonym">Lolium perenne subsp. multiflorum</name>
    <dbReference type="NCBI Taxonomy" id="4521"/>
</organismHost>
<organismHost>
    <name type="scientific">Lolium perenne</name>
    <name type="common">Perennial ryegrass</name>
    <dbReference type="NCBI Taxonomy" id="4522"/>
</organismHost>
<organismHost>
    <name type="scientific">Oryza sativa</name>
    <name type="common">Rice</name>
    <dbReference type="NCBI Taxonomy" id="4530"/>
</organismHost>
<organismHost>
    <name type="scientific">Secale cereale</name>
    <name type="common">Rye</name>
    <dbReference type="NCBI Taxonomy" id="4550"/>
</organismHost>
<organismHost>
    <name type="scientific">Triticum aestivum</name>
    <name type="common">Wheat</name>
    <dbReference type="NCBI Taxonomy" id="4565"/>
</organismHost>
<organismHost>
    <name type="scientific">Zea mays</name>
    <name type="common">Maize</name>
    <dbReference type="NCBI Taxonomy" id="4577"/>
</organismHost>
<name>RDRP_BYDVP</name>
<keyword id="KW-0547">Nucleotide-binding</keyword>
<keyword id="KW-0548">Nucleotidyltransferase</keyword>
<keyword id="KW-1185">Reference proteome</keyword>
<keyword id="KW-0688">Ribosomal frameshifting</keyword>
<keyword id="KW-0696">RNA-directed RNA polymerase</keyword>
<keyword id="KW-0808">Transferase</keyword>
<keyword id="KW-0693">Viral RNA replication</keyword>
<evidence type="ECO:0000255" key="1">
    <source>
        <dbReference type="PROSITE-ProRule" id="PRU00539"/>
    </source>
</evidence>
<evidence type="ECO:0000305" key="2"/>
<gene>
    <name type="ORF">ORF1/ORF2</name>
</gene>
<reference key="1">
    <citation type="journal article" date="1988" name="Nucleic Acids Res.">
        <title>Sequence and organization of barley yellow dwarf virus genomic RNA.</title>
        <authorList>
            <person name="Miller W.A."/>
            <person name="Waterhouse P.M."/>
            <person name="Gerlach W.L."/>
        </authorList>
    </citation>
    <scope>NUCLEOTIDE SEQUENCE [GENOMIC RNA]</scope>
</reference>
<reference key="2">
    <citation type="journal article" date="2002" name="Proc. Natl. Acad. Sci. U.S.A.">
        <title>A -1 ribosomal frameshift element that requires base pairing across four kilobases suggests a mechanism of regulating ribosome and replicase traffic on a viral RNA.</title>
        <authorList>
            <person name="Barry J.K."/>
            <person name="Miller W.A."/>
        </authorList>
    </citation>
    <scope>RIBOSOMAL FRAMESHIFT</scope>
</reference>
<organism>
    <name type="scientific">Barley yellow dwarf virus (isolate PAV)</name>
    <name type="common">BYDV</name>
    <dbReference type="NCBI Taxonomy" id="2169986"/>
    <lineage>
        <taxon>Viruses</taxon>
        <taxon>Riboviria</taxon>
        <taxon>Orthornavirae</taxon>
        <taxon>Kitrinoviricota</taxon>
        <taxon>Tolucaviricetes</taxon>
        <taxon>Tolivirales</taxon>
        <taxon>Tombusviridae</taxon>
        <taxon>Regressovirinae</taxon>
        <taxon>Luteovirus</taxon>
        <taxon>Luteovirus pavhordei</taxon>
    </lineage>
</organism>
<protein>
    <recommendedName>
        <fullName>Putative RNA-directed RNA polymerase</fullName>
        <ecNumber>2.7.7.48</ecNumber>
    </recommendedName>
</protein>
<sequence length="867" mass="98662">MFFEILIGASAKAVKDFISHCYSRLKSIYYSFKRWLMEISGQFKAHDAFVNMCFGHMADIEDFEAELAEEFAEREDEVEEARSLLKLLVAQKSKSGVTEAWTDFFTKSRGGVYAPLSCEPTRQELEVKSEKLERLLEEQHQFEVRAAKKYIKEKGRGFINCWNDLRSRLRLVKDVKDEAKDNARAAAKIGAEMFAPVDVQDLYSFTEVKKVETGLMKEVVKEKNGEEEKHLEPIMEEVRSIKDTAEARDAASTWITETVKLKNATLNADELSLATIARYVENVGDKFKLDIASKTYLKQVASMSVPIPTNKDIKLKMVLQSPEARARRERMDVLDSVGFLEGLCTASGFESPFPILGLPEIAVTDGARLRKVSSNIRYLSQTHLGLVYKAPNASLHNALVAVERRVFTVGKGDKAIYPPRPEHDIFTDTMDYFQKSIIEEVGYCKTYPAQLLANSYSAGKRAMYHKAIASLKTVPYHQKDANVQAFLKKEKHWMTKDIAPRLICPRSKRYNIILGTRLKFNEKKIMHAIDSVFGSPTVLSGYDNFKQGRIIAKKWQKFACPVAIGVDASRFDQHVSEQALKWEHGIYNGIFGDSEMALALEHQITNNIKMFVEDKMLRFKVRGHRMSGDINTSMGNKLIMCGMMHAYLKKLGVEAELCNNGDDCVIITDRANEKLFDGMYDHFLQYGFNMVTEKPVYELEQLEFCQSKPVSINGKYRMVRRPDSIGKDSTTLLSMLNQSDVKSYMSAVAQCGLVLNAGVPILESFYKCLYRSSGYKKVSEEFIKNVISYGTDERLQGRRTYNETPITNHSRMSYWESFGVDPKIQQIVERYYDGLTVSAQLQSVKVTTPHLQSILLSIPENHSQNEY</sequence>
<feature type="chain" id="PRO_0000039186" description="Putative RNA-directed RNA polymerase">
    <location>
        <begin position="1"/>
        <end position="867"/>
    </location>
</feature>
<feature type="domain" description="RdRp catalytic" evidence="1">
    <location>
        <begin position="561"/>
        <end position="676"/>
    </location>
</feature>
<feature type="splice variant" id="VSP_031895" description="In isoform 39 kDa protein." evidence="2">
    <location>
        <begin position="340"/>
        <end position="867"/>
    </location>
</feature>
<proteinExistence type="inferred from homology"/>
<accession>P09505</accession>
<accession>P19648</accession>
<dbReference type="EC" id="2.7.7.48"/>
<dbReference type="EMBL" id="X07653">
    <property type="protein sequence ID" value="CAA30498.1"/>
    <property type="status" value="ALT_SEQ"/>
    <property type="molecule type" value="Genomic_RNA"/>
</dbReference>
<dbReference type="PIR" id="A59303">
    <property type="entry name" value="A59303"/>
</dbReference>
<dbReference type="KEGG" id="vg:1492003"/>
<dbReference type="Proteomes" id="UP000006722">
    <property type="component" value="Genome"/>
</dbReference>
<dbReference type="GO" id="GO:0000166">
    <property type="term" value="F:nucleotide binding"/>
    <property type="evidence" value="ECO:0007669"/>
    <property type="project" value="UniProtKB-KW"/>
</dbReference>
<dbReference type="GO" id="GO:0003723">
    <property type="term" value="F:RNA binding"/>
    <property type="evidence" value="ECO:0007669"/>
    <property type="project" value="InterPro"/>
</dbReference>
<dbReference type="GO" id="GO:0003968">
    <property type="term" value="F:RNA-directed RNA polymerase activity"/>
    <property type="evidence" value="ECO:0007669"/>
    <property type="project" value="UniProtKB-KW"/>
</dbReference>
<dbReference type="GO" id="GO:0039694">
    <property type="term" value="P:viral RNA genome replication"/>
    <property type="evidence" value="ECO:0007669"/>
    <property type="project" value="InterPro"/>
</dbReference>
<dbReference type="GO" id="GO:0075523">
    <property type="term" value="P:viral translational frameshifting"/>
    <property type="evidence" value="ECO:0007669"/>
    <property type="project" value="UniProtKB-KW"/>
</dbReference>
<dbReference type="CDD" id="cd23233">
    <property type="entry name" value="Luteovirus_RdRp"/>
    <property type="match status" value="1"/>
</dbReference>
<dbReference type="Gene3D" id="3.30.70.270">
    <property type="match status" value="1"/>
</dbReference>
<dbReference type="InterPro" id="IPR043502">
    <property type="entry name" value="DNA/RNA_pol_sf"/>
</dbReference>
<dbReference type="InterPro" id="IPR013674">
    <property type="entry name" value="Luteo_Rpol_P1-P2"/>
</dbReference>
<dbReference type="InterPro" id="IPR043128">
    <property type="entry name" value="Rev_trsase/Diguanyl_cyclase"/>
</dbReference>
<dbReference type="InterPro" id="IPR007094">
    <property type="entry name" value="RNA-dir_pol_PSvirus"/>
</dbReference>
<dbReference type="InterPro" id="IPR002166">
    <property type="entry name" value="RNA_pol_HCV"/>
</dbReference>
<dbReference type="Pfam" id="PF08467">
    <property type="entry name" value="Luteo_P1-P2"/>
    <property type="match status" value="1"/>
</dbReference>
<dbReference type="Pfam" id="PF00998">
    <property type="entry name" value="RdRP_3"/>
    <property type="match status" value="1"/>
</dbReference>
<dbReference type="SUPFAM" id="SSF56672">
    <property type="entry name" value="DNA/RNA polymerases"/>
    <property type="match status" value="1"/>
</dbReference>
<dbReference type="PROSITE" id="PS50507">
    <property type="entry name" value="RDRP_SSRNA_POS"/>
    <property type="match status" value="1"/>
</dbReference>
<comment type="function">
    <text>Probable polymerase.</text>
</comment>
<comment type="catalytic activity">
    <reaction evidence="1">
        <text>RNA(n) + a ribonucleoside 5'-triphosphate = RNA(n+1) + diphosphate</text>
        <dbReference type="Rhea" id="RHEA:21248"/>
        <dbReference type="Rhea" id="RHEA-COMP:14527"/>
        <dbReference type="Rhea" id="RHEA-COMP:17342"/>
        <dbReference type="ChEBI" id="CHEBI:33019"/>
        <dbReference type="ChEBI" id="CHEBI:61557"/>
        <dbReference type="ChEBI" id="CHEBI:140395"/>
        <dbReference type="EC" id="2.7.7.48"/>
    </reaction>
</comment>
<comment type="alternative products">
    <event type="ribosomal frameshifting"/>
    <isoform>
        <id>P09505-1</id>
        <name>Putative RNA-directed RNA polymerase</name>
        <sequence type="displayed"/>
    </isoform>
    <isoform>
        <id>P09505-2</id>
        <name>39 kDa protein</name>
        <sequence type="described" ref="VSP_031895"/>
    </isoform>
</comment>
<comment type="miscellaneous">
    <molecule>Isoform Putative RNA-directed RNA polymerase</molecule>
    <text>Produced by -1 ribosomal frameshifting between codons 339 and 340.</text>
</comment>
<comment type="miscellaneous">
    <molecule>Isoform 39 kDa protein</molecule>
    <text evidence="2">Produced by conventional translation.</text>
</comment>
<comment type="similarity">
    <text evidence="2">Belongs to the luteoviruses RNA polymerase family.</text>
</comment>